<reference key="1">
    <citation type="journal article" date="2000" name="Nucleic Acids Res.">
        <title>Complete genome sequence of the alkaliphilic bacterium Bacillus halodurans and genomic sequence comparison with Bacillus subtilis.</title>
        <authorList>
            <person name="Takami H."/>
            <person name="Nakasone K."/>
            <person name="Takaki Y."/>
            <person name="Maeno G."/>
            <person name="Sasaki R."/>
            <person name="Masui N."/>
            <person name="Fuji F."/>
            <person name="Hirama C."/>
            <person name="Nakamura Y."/>
            <person name="Ogasawara N."/>
            <person name="Kuhara S."/>
            <person name="Horikoshi K."/>
        </authorList>
    </citation>
    <scope>NUCLEOTIDE SEQUENCE [LARGE SCALE GENOMIC DNA]</scope>
    <source>
        <strain>ATCC BAA-125 / DSM 18197 / FERM 7344 / JCM 9153 / C-125</strain>
    </source>
</reference>
<dbReference type="EC" id="1.1.1.267" evidence="1"/>
<dbReference type="EMBL" id="BA000004">
    <property type="protein sequence ID" value="BAB06140.1"/>
    <property type="status" value="ALT_INIT"/>
    <property type="molecule type" value="Genomic_DNA"/>
</dbReference>
<dbReference type="PIR" id="E83952">
    <property type="entry name" value="E83952"/>
</dbReference>
<dbReference type="RefSeq" id="WP_010898574.1">
    <property type="nucleotide sequence ID" value="NC_002570.2"/>
</dbReference>
<dbReference type="SMR" id="Q9KA69"/>
<dbReference type="STRING" id="272558.gene:10728319"/>
<dbReference type="GeneID" id="87597941"/>
<dbReference type="KEGG" id="bha:BH2421"/>
<dbReference type="eggNOG" id="COG0743">
    <property type="taxonomic scope" value="Bacteria"/>
</dbReference>
<dbReference type="HOGENOM" id="CLU_035714_0_0_9"/>
<dbReference type="OrthoDB" id="9806546at2"/>
<dbReference type="UniPathway" id="UPA00056">
    <property type="reaction ID" value="UER00092"/>
</dbReference>
<dbReference type="Proteomes" id="UP000001258">
    <property type="component" value="Chromosome"/>
</dbReference>
<dbReference type="GO" id="GO:0030604">
    <property type="term" value="F:1-deoxy-D-xylulose-5-phosphate reductoisomerase activity"/>
    <property type="evidence" value="ECO:0007669"/>
    <property type="project" value="UniProtKB-UniRule"/>
</dbReference>
<dbReference type="GO" id="GO:0030145">
    <property type="term" value="F:manganese ion binding"/>
    <property type="evidence" value="ECO:0007669"/>
    <property type="project" value="TreeGrafter"/>
</dbReference>
<dbReference type="GO" id="GO:0070402">
    <property type="term" value="F:NADPH binding"/>
    <property type="evidence" value="ECO:0007669"/>
    <property type="project" value="InterPro"/>
</dbReference>
<dbReference type="GO" id="GO:0051484">
    <property type="term" value="P:isopentenyl diphosphate biosynthetic process, methylerythritol 4-phosphate pathway involved in terpenoid biosynthetic process"/>
    <property type="evidence" value="ECO:0007669"/>
    <property type="project" value="TreeGrafter"/>
</dbReference>
<dbReference type="FunFam" id="3.40.50.720:FF:000045">
    <property type="entry name" value="1-deoxy-D-xylulose 5-phosphate reductoisomerase"/>
    <property type="match status" value="1"/>
</dbReference>
<dbReference type="Gene3D" id="1.10.1740.10">
    <property type="match status" value="1"/>
</dbReference>
<dbReference type="Gene3D" id="3.40.50.720">
    <property type="entry name" value="NAD(P)-binding Rossmann-like Domain"/>
    <property type="match status" value="1"/>
</dbReference>
<dbReference type="HAMAP" id="MF_00183">
    <property type="entry name" value="DXP_reductoisom"/>
    <property type="match status" value="1"/>
</dbReference>
<dbReference type="InterPro" id="IPR003821">
    <property type="entry name" value="DXP_reductoisomerase"/>
</dbReference>
<dbReference type="InterPro" id="IPR013644">
    <property type="entry name" value="DXP_reductoisomerase_C"/>
</dbReference>
<dbReference type="InterPro" id="IPR013512">
    <property type="entry name" value="DXP_reductoisomerase_N"/>
</dbReference>
<dbReference type="InterPro" id="IPR026877">
    <property type="entry name" value="DXPR_C"/>
</dbReference>
<dbReference type="InterPro" id="IPR036169">
    <property type="entry name" value="DXPR_C_sf"/>
</dbReference>
<dbReference type="InterPro" id="IPR036291">
    <property type="entry name" value="NAD(P)-bd_dom_sf"/>
</dbReference>
<dbReference type="NCBIfam" id="TIGR00243">
    <property type="entry name" value="Dxr"/>
    <property type="match status" value="1"/>
</dbReference>
<dbReference type="NCBIfam" id="NF009114">
    <property type="entry name" value="PRK12464.1"/>
    <property type="match status" value="1"/>
</dbReference>
<dbReference type="PANTHER" id="PTHR30525">
    <property type="entry name" value="1-DEOXY-D-XYLULOSE 5-PHOSPHATE REDUCTOISOMERASE"/>
    <property type="match status" value="1"/>
</dbReference>
<dbReference type="PANTHER" id="PTHR30525:SF0">
    <property type="entry name" value="1-DEOXY-D-XYLULOSE 5-PHOSPHATE REDUCTOISOMERASE, CHLOROPLASTIC"/>
    <property type="match status" value="1"/>
</dbReference>
<dbReference type="Pfam" id="PF08436">
    <property type="entry name" value="DXP_redisom_C"/>
    <property type="match status" value="1"/>
</dbReference>
<dbReference type="Pfam" id="PF02670">
    <property type="entry name" value="DXP_reductoisom"/>
    <property type="match status" value="1"/>
</dbReference>
<dbReference type="Pfam" id="PF13288">
    <property type="entry name" value="DXPR_C"/>
    <property type="match status" value="1"/>
</dbReference>
<dbReference type="PIRSF" id="PIRSF006205">
    <property type="entry name" value="Dxp_reductismrs"/>
    <property type="match status" value="1"/>
</dbReference>
<dbReference type="SUPFAM" id="SSF69055">
    <property type="entry name" value="1-deoxy-D-xylulose-5-phosphate reductoisomerase, C-terminal domain"/>
    <property type="match status" value="1"/>
</dbReference>
<dbReference type="SUPFAM" id="SSF55347">
    <property type="entry name" value="Glyceraldehyde-3-phosphate dehydrogenase-like, C-terminal domain"/>
    <property type="match status" value="1"/>
</dbReference>
<dbReference type="SUPFAM" id="SSF51735">
    <property type="entry name" value="NAD(P)-binding Rossmann-fold domains"/>
    <property type="match status" value="1"/>
</dbReference>
<sequence>MKGISVLGATGSIGTQTLDVLANHRDKFRLVAMSVGKNLTLAEEQIHQFKPPLVSVMTDEDRKTLASKVPEGTRVVCGEEGLIEVATAEKAEILVNAVIGSVGLAPTLAAIEAKKTIALANKETLVTAGHLVTEKAREHGVKLLPVDSEHSAIFQALQGERMDRLHRIIITASGGSFRDKSRDELNGVTVEDALKHPNWSMGAKITIDSATMMNKGLEVIEAHWLFNLPYEKIDVLLHKESIIHSMVEFVDRSVIAQLGTPDMRVPIQYALSYPDRLEFHEGQQLNLWEVGKLHFAPLDMERFRCMAFAYESGKQGGTMPTVLNAANEEAVELFLNNQLSFLGIEDVIEKALERHERIDSPSLADILHVDQETRAFVHSLIK</sequence>
<protein>
    <recommendedName>
        <fullName evidence="1">1-deoxy-D-xylulose 5-phosphate reductoisomerase</fullName>
        <shortName evidence="1">DXP reductoisomerase</shortName>
        <ecNumber evidence="1">1.1.1.267</ecNumber>
    </recommendedName>
    <alternativeName>
        <fullName evidence="1">1-deoxyxylulose-5-phosphate reductoisomerase</fullName>
    </alternativeName>
    <alternativeName>
        <fullName evidence="1">2-C-methyl-D-erythritol 4-phosphate synthase</fullName>
    </alternativeName>
</protein>
<feature type="chain" id="PRO_0000163608" description="1-deoxy-D-xylulose 5-phosphate reductoisomerase">
    <location>
        <begin position="1"/>
        <end position="382"/>
    </location>
</feature>
<feature type="binding site" evidence="1">
    <location>
        <position position="10"/>
    </location>
    <ligand>
        <name>NADPH</name>
        <dbReference type="ChEBI" id="CHEBI:57783"/>
    </ligand>
</feature>
<feature type="binding site" evidence="1">
    <location>
        <position position="11"/>
    </location>
    <ligand>
        <name>NADPH</name>
        <dbReference type="ChEBI" id="CHEBI:57783"/>
    </ligand>
</feature>
<feature type="binding site" evidence="1">
    <location>
        <position position="12"/>
    </location>
    <ligand>
        <name>NADPH</name>
        <dbReference type="ChEBI" id="CHEBI:57783"/>
    </ligand>
</feature>
<feature type="binding site" evidence="1">
    <location>
        <position position="13"/>
    </location>
    <ligand>
        <name>NADPH</name>
        <dbReference type="ChEBI" id="CHEBI:57783"/>
    </ligand>
</feature>
<feature type="binding site" evidence="1">
    <location>
        <position position="36"/>
    </location>
    <ligand>
        <name>NADPH</name>
        <dbReference type="ChEBI" id="CHEBI:57783"/>
    </ligand>
</feature>
<feature type="binding site" evidence="1">
    <location>
        <position position="37"/>
    </location>
    <ligand>
        <name>NADPH</name>
        <dbReference type="ChEBI" id="CHEBI:57783"/>
    </ligand>
</feature>
<feature type="binding site" evidence="1">
    <location>
        <position position="38"/>
    </location>
    <ligand>
        <name>NADPH</name>
        <dbReference type="ChEBI" id="CHEBI:57783"/>
    </ligand>
</feature>
<feature type="binding site" evidence="1">
    <location>
        <position position="121"/>
    </location>
    <ligand>
        <name>NADPH</name>
        <dbReference type="ChEBI" id="CHEBI:57783"/>
    </ligand>
</feature>
<feature type="binding site" evidence="1">
    <location>
        <position position="122"/>
    </location>
    <ligand>
        <name>1-deoxy-D-xylulose 5-phosphate</name>
        <dbReference type="ChEBI" id="CHEBI:57792"/>
    </ligand>
</feature>
<feature type="binding site" evidence="1">
    <location>
        <position position="123"/>
    </location>
    <ligand>
        <name>NADPH</name>
        <dbReference type="ChEBI" id="CHEBI:57783"/>
    </ligand>
</feature>
<feature type="binding site" evidence="1">
    <location>
        <position position="147"/>
    </location>
    <ligand>
        <name>Mn(2+)</name>
        <dbReference type="ChEBI" id="CHEBI:29035"/>
    </ligand>
</feature>
<feature type="binding site" evidence="1">
    <location>
        <position position="148"/>
    </location>
    <ligand>
        <name>1-deoxy-D-xylulose 5-phosphate</name>
        <dbReference type="ChEBI" id="CHEBI:57792"/>
    </ligand>
</feature>
<feature type="binding site" evidence="1">
    <location>
        <position position="149"/>
    </location>
    <ligand>
        <name>1-deoxy-D-xylulose 5-phosphate</name>
        <dbReference type="ChEBI" id="CHEBI:57792"/>
    </ligand>
</feature>
<feature type="binding site" evidence="1">
    <location>
        <position position="149"/>
    </location>
    <ligand>
        <name>Mn(2+)</name>
        <dbReference type="ChEBI" id="CHEBI:29035"/>
    </ligand>
</feature>
<feature type="binding site" evidence="1">
    <location>
        <position position="173"/>
    </location>
    <ligand>
        <name>1-deoxy-D-xylulose 5-phosphate</name>
        <dbReference type="ChEBI" id="CHEBI:57792"/>
    </ligand>
</feature>
<feature type="binding site" evidence="1">
    <location>
        <position position="196"/>
    </location>
    <ligand>
        <name>1-deoxy-D-xylulose 5-phosphate</name>
        <dbReference type="ChEBI" id="CHEBI:57792"/>
    </ligand>
</feature>
<feature type="binding site" evidence="1">
    <location>
        <position position="202"/>
    </location>
    <ligand>
        <name>NADPH</name>
        <dbReference type="ChEBI" id="CHEBI:57783"/>
    </ligand>
</feature>
<feature type="binding site" evidence="1">
    <location>
        <position position="209"/>
    </location>
    <ligand>
        <name>1-deoxy-D-xylulose 5-phosphate</name>
        <dbReference type="ChEBI" id="CHEBI:57792"/>
    </ligand>
</feature>
<feature type="binding site" evidence="1">
    <location>
        <position position="214"/>
    </location>
    <ligand>
        <name>1-deoxy-D-xylulose 5-phosphate</name>
        <dbReference type="ChEBI" id="CHEBI:57792"/>
    </ligand>
</feature>
<feature type="binding site" evidence="1">
    <location>
        <position position="215"/>
    </location>
    <ligand>
        <name>1-deoxy-D-xylulose 5-phosphate</name>
        <dbReference type="ChEBI" id="CHEBI:57792"/>
    </ligand>
</feature>
<feature type="binding site" evidence="1">
    <location>
        <position position="218"/>
    </location>
    <ligand>
        <name>1-deoxy-D-xylulose 5-phosphate</name>
        <dbReference type="ChEBI" id="CHEBI:57792"/>
    </ligand>
</feature>
<feature type="binding site" evidence="1">
    <location>
        <position position="218"/>
    </location>
    <ligand>
        <name>Mn(2+)</name>
        <dbReference type="ChEBI" id="CHEBI:29035"/>
    </ligand>
</feature>
<accession>Q9KA69</accession>
<name>DXR_HALH5</name>
<keyword id="KW-0414">Isoprene biosynthesis</keyword>
<keyword id="KW-0464">Manganese</keyword>
<keyword id="KW-0479">Metal-binding</keyword>
<keyword id="KW-0521">NADP</keyword>
<keyword id="KW-0560">Oxidoreductase</keyword>
<keyword id="KW-1185">Reference proteome</keyword>
<evidence type="ECO:0000255" key="1">
    <source>
        <dbReference type="HAMAP-Rule" id="MF_00183"/>
    </source>
</evidence>
<evidence type="ECO:0000305" key="2"/>
<organism>
    <name type="scientific">Halalkalibacterium halodurans (strain ATCC BAA-125 / DSM 18197 / FERM 7344 / JCM 9153 / C-125)</name>
    <name type="common">Bacillus halodurans</name>
    <dbReference type="NCBI Taxonomy" id="272558"/>
    <lineage>
        <taxon>Bacteria</taxon>
        <taxon>Bacillati</taxon>
        <taxon>Bacillota</taxon>
        <taxon>Bacilli</taxon>
        <taxon>Bacillales</taxon>
        <taxon>Bacillaceae</taxon>
        <taxon>Halalkalibacterium (ex Joshi et al. 2022)</taxon>
    </lineage>
</organism>
<gene>
    <name evidence="1" type="primary">dxr</name>
    <name type="ordered locus">BH2421</name>
</gene>
<comment type="function">
    <text evidence="1">Catalyzes the NADPH-dependent rearrangement and reduction of 1-deoxy-D-xylulose-5-phosphate (DXP) to 2-C-methyl-D-erythritol 4-phosphate (MEP).</text>
</comment>
<comment type="catalytic activity">
    <reaction evidence="1">
        <text>2-C-methyl-D-erythritol 4-phosphate + NADP(+) = 1-deoxy-D-xylulose 5-phosphate + NADPH + H(+)</text>
        <dbReference type="Rhea" id="RHEA:13717"/>
        <dbReference type="ChEBI" id="CHEBI:15378"/>
        <dbReference type="ChEBI" id="CHEBI:57783"/>
        <dbReference type="ChEBI" id="CHEBI:57792"/>
        <dbReference type="ChEBI" id="CHEBI:58262"/>
        <dbReference type="ChEBI" id="CHEBI:58349"/>
        <dbReference type="EC" id="1.1.1.267"/>
    </reaction>
    <physiologicalReaction direction="right-to-left" evidence="1">
        <dbReference type="Rhea" id="RHEA:13719"/>
    </physiologicalReaction>
</comment>
<comment type="cofactor">
    <cofactor evidence="1">
        <name>Mg(2+)</name>
        <dbReference type="ChEBI" id="CHEBI:18420"/>
    </cofactor>
    <cofactor evidence="1">
        <name>Mn(2+)</name>
        <dbReference type="ChEBI" id="CHEBI:29035"/>
    </cofactor>
</comment>
<comment type="pathway">
    <text evidence="1">Isoprenoid biosynthesis; isopentenyl diphosphate biosynthesis via DXP pathway; isopentenyl diphosphate from 1-deoxy-D-xylulose 5-phosphate: step 1/6.</text>
</comment>
<comment type="similarity">
    <text evidence="1">Belongs to the DXR family.</text>
</comment>
<comment type="sequence caution" evidence="2">
    <conflict type="erroneous initiation">
        <sequence resource="EMBL-CDS" id="BAB06140"/>
    </conflict>
</comment>
<proteinExistence type="inferred from homology"/>